<evidence type="ECO:0000255" key="1">
    <source>
        <dbReference type="HAMAP-Rule" id="MF_01424"/>
    </source>
</evidence>
<organism>
    <name type="scientific">Salmonella schwarzengrund (strain CVM19633)</name>
    <dbReference type="NCBI Taxonomy" id="439843"/>
    <lineage>
        <taxon>Bacteria</taxon>
        <taxon>Pseudomonadati</taxon>
        <taxon>Pseudomonadota</taxon>
        <taxon>Gammaproteobacteria</taxon>
        <taxon>Enterobacterales</taxon>
        <taxon>Enterobacteriaceae</taxon>
        <taxon>Salmonella</taxon>
    </lineage>
</organism>
<name>MDTC_SALSV</name>
<reference key="1">
    <citation type="journal article" date="2011" name="J. Bacteriol.">
        <title>Comparative genomics of 28 Salmonella enterica isolates: evidence for CRISPR-mediated adaptive sublineage evolution.</title>
        <authorList>
            <person name="Fricke W.F."/>
            <person name="Mammel M.K."/>
            <person name="McDermott P.F."/>
            <person name="Tartera C."/>
            <person name="White D.G."/>
            <person name="Leclerc J.E."/>
            <person name="Ravel J."/>
            <person name="Cebula T.A."/>
        </authorList>
    </citation>
    <scope>NUCLEOTIDE SEQUENCE [LARGE SCALE GENOMIC DNA]</scope>
    <source>
        <strain>CVM19633</strain>
    </source>
</reference>
<keyword id="KW-0997">Cell inner membrane</keyword>
<keyword id="KW-1003">Cell membrane</keyword>
<keyword id="KW-0472">Membrane</keyword>
<keyword id="KW-0812">Transmembrane</keyword>
<keyword id="KW-1133">Transmembrane helix</keyword>
<keyword id="KW-0813">Transport</keyword>
<accession>B4TNI7</accession>
<protein>
    <recommendedName>
        <fullName evidence="1">Multidrug resistance protein MdtC</fullName>
    </recommendedName>
    <alternativeName>
        <fullName evidence="1">Multidrug transporter MdtC</fullName>
    </alternativeName>
</protein>
<proteinExistence type="inferred from homology"/>
<dbReference type="EMBL" id="CP001127">
    <property type="protein sequence ID" value="ACF90568.1"/>
    <property type="molecule type" value="Genomic_DNA"/>
</dbReference>
<dbReference type="RefSeq" id="WP_001210092.1">
    <property type="nucleotide sequence ID" value="NC_011094.1"/>
</dbReference>
<dbReference type="SMR" id="B4TNI7"/>
<dbReference type="KEGG" id="sew:SeSA_A2365"/>
<dbReference type="HOGENOM" id="CLU_002755_1_2_6"/>
<dbReference type="Proteomes" id="UP000001865">
    <property type="component" value="Chromosome"/>
</dbReference>
<dbReference type="GO" id="GO:0005886">
    <property type="term" value="C:plasma membrane"/>
    <property type="evidence" value="ECO:0007669"/>
    <property type="project" value="UniProtKB-SubCell"/>
</dbReference>
<dbReference type="GO" id="GO:0042910">
    <property type="term" value="F:xenobiotic transmembrane transporter activity"/>
    <property type="evidence" value="ECO:0007669"/>
    <property type="project" value="TreeGrafter"/>
</dbReference>
<dbReference type="FunFam" id="1.20.1640.10:FF:000001">
    <property type="entry name" value="Efflux pump membrane transporter"/>
    <property type="match status" value="1"/>
</dbReference>
<dbReference type="FunFam" id="3.30.70.1430:FF:000001">
    <property type="entry name" value="Efflux pump membrane transporter"/>
    <property type="match status" value="1"/>
</dbReference>
<dbReference type="FunFam" id="3.30.2090.10:FF:000004">
    <property type="entry name" value="Multidrug resistance protein MdtC"/>
    <property type="match status" value="1"/>
</dbReference>
<dbReference type="FunFam" id="3.30.2090.10:FF:000005">
    <property type="entry name" value="Multidrug resistance protein MdtC"/>
    <property type="match status" value="1"/>
</dbReference>
<dbReference type="FunFam" id="3.30.70.1430:FF:000004">
    <property type="entry name" value="Multidrug resistance protein MdtC"/>
    <property type="match status" value="1"/>
</dbReference>
<dbReference type="Gene3D" id="3.30.70.1430">
    <property type="entry name" value="Multidrug efflux transporter AcrB pore domain"/>
    <property type="match status" value="2"/>
</dbReference>
<dbReference type="Gene3D" id="3.30.70.1440">
    <property type="entry name" value="Multidrug efflux transporter AcrB pore domain"/>
    <property type="match status" value="1"/>
</dbReference>
<dbReference type="Gene3D" id="3.30.70.1320">
    <property type="entry name" value="Multidrug efflux transporter AcrB pore domain like"/>
    <property type="match status" value="1"/>
</dbReference>
<dbReference type="Gene3D" id="3.30.2090.10">
    <property type="entry name" value="Multidrug efflux transporter AcrB TolC docking domain, DN and DC subdomains"/>
    <property type="match status" value="2"/>
</dbReference>
<dbReference type="Gene3D" id="1.20.1640.10">
    <property type="entry name" value="Multidrug efflux transporter AcrB transmembrane domain"/>
    <property type="match status" value="2"/>
</dbReference>
<dbReference type="HAMAP" id="MF_01424">
    <property type="entry name" value="MdtC"/>
    <property type="match status" value="1"/>
</dbReference>
<dbReference type="InterPro" id="IPR027463">
    <property type="entry name" value="AcrB_DN_DC_subdom"/>
</dbReference>
<dbReference type="InterPro" id="IPR001036">
    <property type="entry name" value="Acrflvin-R"/>
</dbReference>
<dbReference type="InterPro" id="IPR023931">
    <property type="entry name" value="Multidrug-R_MdtC"/>
</dbReference>
<dbReference type="NCBIfam" id="NF007905">
    <property type="entry name" value="PRK10614.1"/>
    <property type="match status" value="1"/>
</dbReference>
<dbReference type="NCBIfam" id="NF033617">
    <property type="entry name" value="RND_permease_2"/>
    <property type="match status" value="1"/>
</dbReference>
<dbReference type="PANTHER" id="PTHR32063">
    <property type="match status" value="1"/>
</dbReference>
<dbReference type="PANTHER" id="PTHR32063:SF34">
    <property type="entry name" value="MULTIDRUG RESISTANCE PROTEIN MDTC"/>
    <property type="match status" value="1"/>
</dbReference>
<dbReference type="Pfam" id="PF00873">
    <property type="entry name" value="ACR_tran"/>
    <property type="match status" value="1"/>
</dbReference>
<dbReference type="PRINTS" id="PR00702">
    <property type="entry name" value="ACRIFLAVINRP"/>
</dbReference>
<dbReference type="SUPFAM" id="SSF82693">
    <property type="entry name" value="Multidrug efflux transporter AcrB pore domain, PN1, PN2, PC1 and PC2 subdomains"/>
    <property type="match status" value="4"/>
</dbReference>
<dbReference type="SUPFAM" id="SSF82714">
    <property type="entry name" value="Multidrug efflux transporter AcrB TolC docking domain, DN and DC subdomains"/>
    <property type="match status" value="2"/>
</dbReference>
<dbReference type="SUPFAM" id="SSF82866">
    <property type="entry name" value="Multidrug efflux transporter AcrB transmembrane domain"/>
    <property type="match status" value="2"/>
</dbReference>
<comment type="subunit">
    <text evidence="1">Part of a tripartite efflux system composed of MdtA, MdtB and MdtC. MdtC forms a heteromultimer with MdtB.</text>
</comment>
<comment type="subcellular location">
    <subcellularLocation>
        <location evidence="1">Cell inner membrane</location>
        <topology evidence="1">Multi-pass membrane protein</topology>
    </subcellularLocation>
</comment>
<comment type="similarity">
    <text evidence="1">Belongs to the resistance-nodulation-cell division (RND) (TC 2.A.6) family. MdtC subfamily.</text>
</comment>
<feature type="chain" id="PRO_1000145684" description="Multidrug resistance protein MdtC">
    <location>
        <begin position="1"/>
        <end position="1026"/>
    </location>
</feature>
<feature type="transmembrane region" description="Helical" evidence="1">
    <location>
        <begin position="15"/>
        <end position="35"/>
    </location>
</feature>
<feature type="transmembrane region" description="Helical" evidence="1">
    <location>
        <begin position="333"/>
        <end position="353"/>
    </location>
</feature>
<feature type="transmembrane region" description="Helical" evidence="1">
    <location>
        <begin position="360"/>
        <end position="380"/>
    </location>
</feature>
<feature type="transmembrane region" description="Helical" evidence="1">
    <location>
        <begin position="387"/>
        <end position="407"/>
    </location>
</feature>
<feature type="transmembrane region" description="Helical" evidence="1">
    <location>
        <begin position="431"/>
        <end position="451"/>
    </location>
</feature>
<feature type="transmembrane region" description="Helical" evidence="1">
    <location>
        <begin position="463"/>
        <end position="483"/>
    </location>
</feature>
<feature type="transmembrane region" description="Helical" evidence="1">
    <location>
        <begin position="528"/>
        <end position="548"/>
    </location>
</feature>
<feature type="transmembrane region" description="Helical" evidence="1">
    <location>
        <begin position="853"/>
        <end position="873"/>
    </location>
</feature>
<feature type="transmembrane region" description="Helical" evidence="1">
    <location>
        <begin position="897"/>
        <end position="917"/>
    </location>
</feature>
<feature type="transmembrane region" description="Helical" evidence="1">
    <location>
        <begin position="953"/>
        <end position="973"/>
    </location>
</feature>
<feature type="transmembrane region" description="Helical" evidence="1">
    <location>
        <begin position="984"/>
        <end position="1004"/>
    </location>
</feature>
<gene>
    <name evidence="1" type="primary">mdtC</name>
    <name type="ordered locus">SeSA_A2365</name>
</gene>
<sequence>MRFFALFIYRPVATILIAAAITLCGILGFRLLPVAPLPQVDFPVIMVSASLPGASPETMASSVATPLERSLGRIAGVNEMTSSSSLGSTRIILEFNFDRDINGAARDVQAAINAAQSLLPGGMPSRPTYRKANPSDAPIMILTLTSESWSQGKLYDFASTQLAQTIAQIDGVGDVDVGGSSLPAVRVGLNPQALFNQGVSLDEVREAIDSANVRRPQGAIEDSVHRWQIQTNDELKTAAEYQPLIIHYNNGAAVRLGDVASVTDSVQDVRNAGMTNAKPAILLMIRKLPEANIIQTVDGIRAKLPELRAMIPAAIDLQIAQDRSPTIRASLQEVEETLVISVALVILVVFLFLRSGRATLIPAVAVPVSLIGTFAAMYLCGFSLNNLSLMALTIATGFVVDDAIVVLENIARHLEAGMKPLQAALQGTREVGFTVISMSLSLVAVFLPLLLMGGLPGRLLREFAVTLSVAIGISLVVSLTLTPMMCGWMLKSSKPRTQPRKRGVGRLLVALQQGYGTSLKWVLNHTRLVGVVFLGTVALNIWLYIAIPKTFFPEQDTGVLMGGIQADQSISFQAMRGKLQDFMKIIRDDPAVNNVTGFTGGSRVNSGMMFITLKPRGERKETAQQIIDRLRVKLAKEPGARLFLMAVQDIRVGGRQANASYQYTLLSDSLAALREWEPKIRKALSALPQLADVNSDQQDNGAEMNLIYDRDTMSRLGIDVQAANSLLNNAFGQRQISTIYQPMNQYKVVMEVDPRYSQDISALEKMFVINRDGKAIPLSYFAQWRPANAPLSVNHQGLSAASTIAFNLPTGTSLSQATEAINRTMTQLGVPPTVRGSFSGTAQVFQQTMNSQLILIVAAIATVYIVLGILYESYVHPLTILSTLPSAGVGALLALELFNAPFSLIALIGIMLLIGIVKKNAIMMVDFALEAQRSGGLTPEQAIFQACLLRFRPIMMTTLAALFGALPLVLSGGDGSELRQPLGITIVGGLVMSQLLTLYTTPVVYLFFDRLRRRFSRKNSKPVVEI</sequence>